<gene>
    <name type="ordered locus">Shewmr7_1666</name>
</gene>
<proteinExistence type="inferred from homology"/>
<accession>Q0HW44</accession>
<comment type="function">
    <text evidence="1">Bifunctional serine/threonine kinase and phosphorylase involved in the regulation of the phosphoenolpyruvate synthase (PEPS) by catalyzing its phosphorylation/dephosphorylation.</text>
</comment>
<comment type="catalytic activity">
    <reaction evidence="1">
        <text>[pyruvate, water dikinase] + ADP = [pyruvate, water dikinase]-phosphate + AMP + H(+)</text>
        <dbReference type="Rhea" id="RHEA:46020"/>
        <dbReference type="Rhea" id="RHEA-COMP:11425"/>
        <dbReference type="Rhea" id="RHEA-COMP:11426"/>
        <dbReference type="ChEBI" id="CHEBI:15378"/>
        <dbReference type="ChEBI" id="CHEBI:43176"/>
        <dbReference type="ChEBI" id="CHEBI:68546"/>
        <dbReference type="ChEBI" id="CHEBI:456215"/>
        <dbReference type="ChEBI" id="CHEBI:456216"/>
        <dbReference type="EC" id="2.7.11.33"/>
    </reaction>
</comment>
<comment type="catalytic activity">
    <reaction evidence="1">
        <text>[pyruvate, water dikinase]-phosphate + phosphate + H(+) = [pyruvate, water dikinase] + diphosphate</text>
        <dbReference type="Rhea" id="RHEA:48580"/>
        <dbReference type="Rhea" id="RHEA-COMP:11425"/>
        <dbReference type="Rhea" id="RHEA-COMP:11426"/>
        <dbReference type="ChEBI" id="CHEBI:15378"/>
        <dbReference type="ChEBI" id="CHEBI:33019"/>
        <dbReference type="ChEBI" id="CHEBI:43176"/>
        <dbReference type="ChEBI" id="CHEBI:43474"/>
        <dbReference type="ChEBI" id="CHEBI:68546"/>
        <dbReference type="EC" id="2.7.4.28"/>
    </reaction>
</comment>
<comment type="similarity">
    <text evidence="1">Belongs to the pyruvate, phosphate/water dikinase regulatory protein family. PSRP subfamily.</text>
</comment>
<name>PSRP_SHESR</name>
<dbReference type="EC" id="2.7.11.33" evidence="1"/>
<dbReference type="EC" id="2.7.4.28" evidence="1"/>
<dbReference type="EMBL" id="CP000444">
    <property type="protein sequence ID" value="ABI42661.1"/>
    <property type="molecule type" value="Genomic_DNA"/>
</dbReference>
<dbReference type="SMR" id="Q0HW44"/>
<dbReference type="KEGG" id="shm:Shewmr7_1666"/>
<dbReference type="HOGENOM" id="CLU_046206_1_0_6"/>
<dbReference type="GO" id="GO:0043531">
    <property type="term" value="F:ADP binding"/>
    <property type="evidence" value="ECO:0007669"/>
    <property type="project" value="UniProtKB-UniRule"/>
</dbReference>
<dbReference type="GO" id="GO:0005524">
    <property type="term" value="F:ATP binding"/>
    <property type="evidence" value="ECO:0007669"/>
    <property type="project" value="InterPro"/>
</dbReference>
<dbReference type="GO" id="GO:0016776">
    <property type="term" value="F:phosphotransferase activity, phosphate group as acceptor"/>
    <property type="evidence" value="ECO:0007669"/>
    <property type="project" value="UniProtKB-UniRule"/>
</dbReference>
<dbReference type="GO" id="GO:0004674">
    <property type="term" value="F:protein serine/threonine kinase activity"/>
    <property type="evidence" value="ECO:0007669"/>
    <property type="project" value="UniProtKB-UniRule"/>
</dbReference>
<dbReference type="HAMAP" id="MF_01062">
    <property type="entry name" value="PSRP"/>
    <property type="match status" value="1"/>
</dbReference>
<dbReference type="InterPro" id="IPR005177">
    <property type="entry name" value="Kinase-pyrophosphorylase"/>
</dbReference>
<dbReference type="InterPro" id="IPR026530">
    <property type="entry name" value="PSRP"/>
</dbReference>
<dbReference type="NCBIfam" id="NF003742">
    <property type="entry name" value="PRK05339.1"/>
    <property type="match status" value="1"/>
</dbReference>
<dbReference type="PANTHER" id="PTHR31756">
    <property type="entry name" value="PYRUVATE, PHOSPHATE DIKINASE REGULATORY PROTEIN 1, CHLOROPLASTIC"/>
    <property type="match status" value="1"/>
</dbReference>
<dbReference type="PANTHER" id="PTHR31756:SF3">
    <property type="entry name" value="PYRUVATE, PHOSPHATE DIKINASE REGULATORY PROTEIN 1, CHLOROPLASTIC"/>
    <property type="match status" value="1"/>
</dbReference>
<dbReference type="Pfam" id="PF03618">
    <property type="entry name" value="Kinase-PPPase"/>
    <property type="match status" value="1"/>
</dbReference>
<organism>
    <name type="scientific">Shewanella sp. (strain MR-7)</name>
    <dbReference type="NCBI Taxonomy" id="60481"/>
    <lineage>
        <taxon>Bacteria</taxon>
        <taxon>Pseudomonadati</taxon>
        <taxon>Pseudomonadota</taxon>
        <taxon>Gammaproteobacteria</taxon>
        <taxon>Alteromonadales</taxon>
        <taxon>Shewanellaceae</taxon>
        <taxon>Shewanella</taxon>
    </lineage>
</organism>
<sequence>MAPKVFYISDGTAITAEVFGHAVLSQFPLEFESLTIPFVETLAKAENVKRQINDCFITTGERPLVFHSIVKPEIRDIIYSSEGLDYDFLNTFVAPLEQHLGVSASPVLHRTHGKANHGYEARIDAINFAMDNDDGQTMKHMDQADLILLGVSRCGKTPSSLYLSMQFGIKAANYPFTEDDMDNLKLPEALKRNKKKLFGLTIDPVRLHEIRQSRMENSRYSSLKQCRLEVKEVEMMFKRERIPYIDTTNHSVEEIATKILDVTGLERHMF</sequence>
<keyword id="KW-0418">Kinase</keyword>
<keyword id="KW-0547">Nucleotide-binding</keyword>
<keyword id="KW-0723">Serine/threonine-protein kinase</keyword>
<keyword id="KW-0808">Transferase</keyword>
<protein>
    <recommendedName>
        <fullName evidence="1">Putative phosphoenolpyruvate synthase regulatory protein</fullName>
        <shortName evidence="1">PEP synthase regulatory protein</shortName>
        <shortName evidence="1">PSRP</shortName>
        <ecNumber evidence="1">2.7.11.33</ecNumber>
        <ecNumber evidence="1">2.7.4.28</ecNumber>
    </recommendedName>
    <alternativeName>
        <fullName evidence="1">Pyruvate, water dikinase regulatory protein</fullName>
    </alternativeName>
</protein>
<evidence type="ECO:0000255" key="1">
    <source>
        <dbReference type="HAMAP-Rule" id="MF_01062"/>
    </source>
</evidence>
<reference key="1">
    <citation type="submission" date="2006-08" db="EMBL/GenBank/DDBJ databases">
        <title>Complete sequence of chromosome 1 of Shewanella sp. MR-7.</title>
        <authorList>
            <person name="Copeland A."/>
            <person name="Lucas S."/>
            <person name="Lapidus A."/>
            <person name="Barry K."/>
            <person name="Detter J.C."/>
            <person name="Glavina del Rio T."/>
            <person name="Hammon N."/>
            <person name="Israni S."/>
            <person name="Dalin E."/>
            <person name="Tice H."/>
            <person name="Pitluck S."/>
            <person name="Kiss H."/>
            <person name="Brettin T."/>
            <person name="Bruce D."/>
            <person name="Han C."/>
            <person name="Tapia R."/>
            <person name="Gilna P."/>
            <person name="Schmutz J."/>
            <person name="Larimer F."/>
            <person name="Land M."/>
            <person name="Hauser L."/>
            <person name="Kyrpides N."/>
            <person name="Mikhailova N."/>
            <person name="Nealson K."/>
            <person name="Konstantinidis K."/>
            <person name="Klappenbach J."/>
            <person name="Tiedje J."/>
            <person name="Richardson P."/>
        </authorList>
    </citation>
    <scope>NUCLEOTIDE SEQUENCE [LARGE SCALE GENOMIC DNA]</scope>
    <source>
        <strain>MR-7</strain>
    </source>
</reference>
<feature type="chain" id="PRO_0000316740" description="Putative phosphoenolpyruvate synthase regulatory protein">
    <location>
        <begin position="1"/>
        <end position="270"/>
    </location>
</feature>
<feature type="binding site" evidence="1">
    <location>
        <begin position="150"/>
        <end position="157"/>
    </location>
    <ligand>
        <name>ADP</name>
        <dbReference type="ChEBI" id="CHEBI:456216"/>
    </ligand>
</feature>